<organism>
    <name type="scientific">Phenylobacterium zucineum (strain HLK1)</name>
    <dbReference type="NCBI Taxonomy" id="450851"/>
    <lineage>
        <taxon>Bacteria</taxon>
        <taxon>Pseudomonadati</taxon>
        <taxon>Pseudomonadota</taxon>
        <taxon>Alphaproteobacteria</taxon>
        <taxon>Caulobacterales</taxon>
        <taxon>Caulobacteraceae</taxon>
        <taxon>Phenylobacterium</taxon>
    </lineage>
</organism>
<keyword id="KW-0450">Lipoyl</keyword>
<keyword id="KW-1185">Reference proteome</keyword>
<reference key="1">
    <citation type="journal article" date="2008" name="BMC Genomics">
        <title>Complete genome of Phenylobacterium zucineum - a novel facultative intracellular bacterium isolated from human erythroleukemia cell line K562.</title>
        <authorList>
            <person name="Luo Y."/>
            <person name="Xu X."/>
            <person name="Ding Z."/>
            <person name="Liu Z."/>
            <person name="Zhang B."/>
            <person name="Yan Z."/>
            <person name="Sun J."/>
            <person name="Hu S."/>
            <person name="Hu X."/>
        </authorList>
    </citation>
    <scope>NUCLEOTIDE SEQUENCE [LARGE SCALE GENOMIC DNA]</scope>
    <source>
        <strain>HLK1</strain>
    </source>
</reference>
<proteinExistence type="inferred from homology"/>
<gene>
    <name evidence="1" type="primary">gcvH</name>
    <name type="ordered locus">PHZ_c0591</name>
</gene>
<evidence type="ECO:0000255" key="1">
    <source>
        <dbReference type="HAMAP-Rule" id="MF_00272"/>
    </source>
</evidence>
<evidence type="ECO:0000255" key="2">
    <source>
        <dbReference type="PROSITE-ProRule" id="PRU01066"/>
    </source>
</evidence>
<comment type="function">
    <text evidence="1">The glycine cleavage system catalyzes the degradation of glycine. The H protein shuttles the methylamine group of glycine from the P protein to the T protein.</text>
</comment>
<comment type="cofactor">
    <cofactor evidence="1">
        <name>(R)-lipoate</name>
        <dbReference type="ChEBI" id="CHEBI:83088"/>
    </cofactor>
    <text evidence="1">Binds 1 lipoyl cofactor covalently.</text>
</comment>
<comment type="subunit">
    <text evidence="1">The glycine cleavage system is composed of four proteins: P, T, L and H.</text>
</comment>
<comment type="similarity">
    <text evidence="1">Belongs to the GcvH family.</text>
</comment>
<name>GCSH_PHEZH</name>
<accession>B4RF17</accession>
<dbReference type="EMBL" id="CP000747">
    <property type="protein sequence ID" value="ACG77005.1"/>
    <property type="molecule type" value="Genomic_DNA"/>
</dbReference>
<dbReference type="RefSeq" id="WP_012521153.1">
    <property type="nucleotide sequence ID" value="NC_011144.1"/>
</dbReference>
<dbReference type="SMR" id="B4RF17"/>
<dbReference type="STRING" id="450851.PHZ_c0591"/>
<dbReference type="KEGG" id="pzu:PHZ_c0591"/>
<dbReference type="eggNOG" id="COG0509">
    <property type="taxonomic scope" value="Bacteria"/>
</dbReference>
<dbReference type="HOGENOM" id="CLU_097408_2_0_5"/>
<dbReference type="OrthoDB" id="9796712at2"/>
<dbReference type="Proteomes" id="UP000001868">
    <property type="component" value="Chromosome"/>
</dbReference>
<dbReference type="GO" id="GO:0005737">
    <property type="term" value="C:cytoplasm"/>
    <property type="evidence" value="ECO:0007669"/>
    <property type="project" value="TreeGrafter"/>
</dbReference>
<dbReference type="GO" id="GO:0005960">
    <property type="term" value="C:glycine cleavage complex"/>
    <property type="evidence" value="ECO:0007669"/>
    <property type="project" value="InterPro"/>
</dbReference>
<dbReference type="GO" id="GO:0019464">
    <property type="term" value="P:glycine decarboxylation via glycine cleavage system"/>
    <property type="evidence" value="ECO:0007669"/>
    <property type="project" value="UniProtKB-UniRule"/>
</dbReference>
<dbReference type="CDD" id="cd06848">
    <property type="entry name" value="GCS_H"/>
    <property type="match status" value="1"/>
</dbReference>
<dbReference type="Gene3D" id="2.40.50.100">
    <property type="match status" value="1"/>
</dbReference>
<dbReference type="HAMAP" id="MF_00272">
    <property type="entry name" value="GcvH"/>
    <property type="match status" value="1"/>
</dbReference>
<dbReference type="InterPro" id="IPR003016">
    <property type="entry name" value="2-oxoA_DH_lipoyl-BS"/>
</dbReference>
<dbReference type="InterPro" id="IPR000089">
    <property type="entry name" value="Biotin_lipoyl"/>
</dbReference>
<dbReference type="InterPro" id="IPR002930">
    <property type="entry name" value="GCV_H"/>
</dbReference>
<dbReference type="InterPro" id="IPR033753">
    <property type="entry name" value="GCV_H/Fam206"/>
</dbReference>
<dbReference type="InterPro" id="IPR017453">
    <property type="entry name" value="GCV_H_sub"/>
</dbReference>
<dbReference type="InterPro" id="IPR011053">
    <property type="entry name" value="Single_hybrid_motif"/>
</dbReference>
<dbReference type="NCBIfam" id="TIGR00527">
    <property type="entry name" value="gcvH"/>
    <property type="match status" value="1"/>
</dbReference>
<dbReference type="NCBIfam" id="NF002270">
    <property type="entry name" value="PRK01202.1"/>
    <property type="match status" value="1"/>
</dbReference>
<dbReference type="PANTHER" id="PTHR11715">
    <property type="entry name" value="GLYCINE CLEAVAGE SYSTEM H PROTEIN"/>
    <property type="match status" value="1"/>
</dbReference>
<dbReference type="PANTHER" id="PTHR11715:SF3">
    <property type="entry name" value="GLYCINE CLEAVAGE SYSTEM H PROTEIN-RELATED"/>
    <property type="match status" value="1"/>
</dbReference>
<dbReference type="Pfam" id="PF01597">
    <property type="entry name" value="GCV_H"/>
    <property type="match status" value="1"/>
</dbReference>
<dbReference type="SUPFAM" id="SSF51230">
    <property type="entry name" value="Single hybrid motif"/>
    <property type="match status" value="1"/>
</dbReference>
<dbReference type="PROSITE" id="PS50968">
    <property type="entry name" value="BIOTINYL_LIPOYL"/>
    <property type="match status" value="1"/>
</dbReference>
<dbReference type="PROSITE" id="PS00189">
    <property type="entry name" value="LIPOYL"/>
    <property type="match status" value="1"/>
</dbReference>
<feature type="chain" id="PRO_1000114535" description="Glycine cleavage system H protein">
    <location>
        <begin position="1"/>
        <end position="121"/>
    </location>
</feature>
<feature type="domain" description="Lipoyl-binding" evidence="2">
    <location>
        <begin position="16"/>
        <end position="98"/>
    </location>
</feature>
<feature type="modified residue" description="N6-lipoyllysine" evidence="1">
    <location>
        <position position="57"/>
    </location>
</feature>
<protein>
    <recommendedName>
        <fullName evidence="1">Glycine cleavage system H protein</fullName>
    </recommendedName>
</protein>
<sequence length="121" mass="12618">MRFTKDHEWVALDGDVATIGITAHAAEQLGDVVFVEVPEVGRQVKAGDAFAVVESVKAASDVYAPVTGEVVEANEALSGAPETVNAEPEAGGWFAKVRVADPAELDGLMDKAAYDAFVANS</sequence>